<organism>
    <name type="scientific">Yersinia pestis (strain Pestoides F)</name>
    <dbReference type="NCBI Taxonomy" id="386656"/>
    <lineage>
        <taxon>Bacteria</taxon>
        <taxon>Pseudomonadati</taxon>
        <taxon>Pseudomonadota</taxon>
        <taxon>Gammaproteobacteria</taxon>
        <taxon>Enterobacterales</taxon>
        <taxon>Yersiniaceae</taxon>
        <taxon>Yersinia</taxon>
    </lineage>
</organism>
<feature type="chain" id="PRO_0000369801" description="Ribosomal RNA small subunit methyltransferase C">
    <location>
        <begin position="1"/>
        <end position="347"/>
    </location>
</feature>
<keyword id="KW-0963">Cytoplasm</keyword>
<keyword id="KW-0489">Methyltransferase</keyword>
<keyword id="KW-0698">rRNA processing</keyword>
<keyword id="KW-0949">S-adenosyl-L-methionine</keyword>
<keyword id="KW-0808">Transferase</keyword>
<accession>A4TQK1</accession>
<protein>
    <recommendedName>
        <fullName evidence="1">Ribosomal RNA small subunit methyltransferase C</fullName>
        <ecNumber evidence="1">2.1.1.172</ecNumber>
    </recommendedName>
    <alternativeName>
        <fullName evidence="1">16S rRNA m2G1207 methyltransferase</fullName>
    </alternativeName>
    <alternativeName>
        <fullName evidence="1">rRNA (guanine-N(2)-)-methyltransferase RsmC</fullName>
    </alternativeName>
</protein>
<gene>
    <name evidence="1" type="primary">rsmC</name>
    <name type="ordered locus">YPDSF_3205</name>
</gene>
<comment type="function">
    <text evidence="1">Specifically methylates the guanine in position 1207 of 16S rRNA in the 30S particle.</text>
</comment>
<comment type="catalytic activity">
    <reaction evidence="1">
        <text>guanosine(1207) in 16S rRNA + S-adenosyl-L-methionine = N(2)-methylguanosine(1207) in 16S rRNA + S-adenosyl-L-homocysteine + H(+)</text>
        <dbReference type="Rhea" id="RHEA:42736"/>
        <dbReference type="Rhea" id="RHEA-COMP:10213"/>
        <dbReference type="Rhea" id="RHEA-COMP:10214"/>
        <dbReference type="ChEBI" id="CHEBI:15378"/>
        <dbReference type="ChEBI" id="CHEBI:57856"/>
        <dbReference type="ChEBI" id="CHEBI:59789"/>
        <dbReference type="ChEBI" id="CHEBI:74269"/>
        <dbReference type="ChEBI" id="CHEBI:74481"/>
        <dbReference type="EC" id="2.1.1.172"/>
    </reaction>
</comment>
<comment type="subunit">
    <text evidence="1">Monomer.</text>
</comment>
<comment type="subcellular location">
    <subcellularLocation>
        <location evidence="1">Cytoplasm</location>
    </subcellularLocation>
</comment>
<comment type="similarity">
    <text evidence="1">Belongs to the methyltransferase superfamily. RsmC family.</text>
</comment>
<dbReference type="EC" id="2.1.1.172" evidence="1"/>
<dbReference type="EMBL" id="CP000668">
    <property type="protein sequence ID" value="ABP41563.1"/>
    <property type="molecule type" value="Genomic_DNA"/>
</dbReference>
<dbReference type="RefSeq" id="WP_002209206.1">
    <property type="nucleotide sequence ID" value="NZ_CP009715.1"/>
</dbReference>
<dbReference type="SMR" id="A4TQK1"/>
<dbReference type="GeneID" id="57974183"/>
<dbReference type="KEGG" id="ypp:YPDSF_3205"/>
<dbReference type="PATRIC" id="fig|386656.14.peg.1141"/>
<dbReference type="GO" id="GO:0005737">
    <property type="term" value="C:cytoplasm"/>
    <property type="evidence" value="ECO:0007669"/>
    <property type="project" value="UniProtKB-SubCell"/>
</dbReference>
<dbReference type="GO" id="GO:0052914">
    <property type="term" value="F:16S rRNA (guanine(1207)-N(2))-methyltransferase activity"/>
    <property type="evidence" value="ECO:0007669"/>
    <property type="project" value="UniProtKB-EC"/>
</dbReference>
<dbReference type="GO" id="GO:0003676">
    <property type="term" value="F:nucleic acid binding"/>
    <property type="evidence" value="ECO:0007669"/>
    <property type="project" value="InterPro"/>
</dbReference>
<dbReference type="CDD" id="cd02440">
    <property type="entry name" value="AdoMet_MTases"/>
    <property type="match status" value="1"/>
</dbReference>
<dbReference type="Gene3D" id="3.40.50.150">
    <property type="entry name" value="Vaccinia Virus protein VP39"/>
    <property type="match status" value="2"/>
</dbReference>
<dbReference type="HAMAP" id="MF_01862">
    <property type="entry name" value="16SrRNA_methyltr_C"/>
    <property type="match status" value="1"/>
</dbReference>
<dbReference type="InterPro" id="IPR002052">
    <property type="entry name" value="DNA_methylase_N6_adenine_CS"/>
</dbReference>
<dbReference type="InterPro" id="IPR013675">
    <property type="entry name" value="Mtase_sm_N"/>
</dbReference>
<dbReference type="InterPro" id="IPR023543">
    <property type="entry name" value="rRNA_ssu_MeTfrase_C"/>
</dbReference>
<dbReference type="InterPro" id="IPR046977">
    <property type="entry name" value="RsmC/RlmG"/>
</dbReference>
<dbReference type="InterPro" id="IPR029063">
    <property type="entry name" value="SAM-dependent_MTases_sf"/>
</dbReference>
<dbReference type="InterPro" id="IPR007848">
    <property type="entry name" value="Small_mtfrase_dom"/>
</dbReference>
<dbReference type="NCBIfam" id="NF007023">
    <property type="entry name" value="PRK09489.1"/>
    <property type="match status" value="1"/>
</dbReference>
<dbReference type="PANTHER" id="PTHR47816">
    <property type="entry name" value="RIBOSOMAL RNA SMALL SUBUNIT METHYLTRANSFERASE C"/>
    <property type="match status" value="1"/>
</dbReference>
<dbReference type="PANTHER" id="PTHR47816:SF4">
    <property type="entry name" value="RIBOSOMAL RNA SMALL SUBUNIT METHYLTRANSFERASE C"/>
    <property type="match status" value="1"/>
</dbReference>
<dbReference type="Pfam" id="PF05175">
    <property type="entry name" value="MTS"/>
    <property type="match status" value="1"/>
</dbReference>
<dbReference type="Pfam" id="PF08468">
    <property type="entry name" value="MTS_N"/>
    <property type="match status" value="1"/>
</dbReference>
<dbReference type="SUPFAM" id="SSF53335">
    <property type="entry name" value="S-adenosyl-L-methionine-dependent methyltransferases"/>
    <property type="match status" value="1"/>
</dbReference>
<sequence>MSALTPASEVILRHSDEFIARHVLFAGDLQDALPAQFDAAGVRVHTNQYHHWQLLSNTLEENVQFGLLATAETLAACDTLIYYWPKSKQEAQFQLANLLSILPVGTDIFVVGENRSGVRSAEEMLADFAQLAKIDSARRCGLYHGRLDKQPEFDADAWWESYQVGGVTVKTLPGVFSRDSLDSGSHLLLSTFNEPFKGSVLDVGCGAGVLASVLAQQSPKIKWTLSDVSAAAIEASRATLAVNNIEAQVIASNVYSDIKGRFEMIISNPPFHDGIQTSLTAAEMLIRGATAHLHVGGKLRIVANSFLPYPALLDAAFGSHEVLAQNGRFKVYQATVGRPPRDPKKKR</sequence>
<reference key="1">
    <citation type="submission" date="2007-02" db="EMBL/GenBank/DDBJ databases">
        <title>Complete sequence of chromosome of Yersinia pestis Pestoides F.</title>
        <authorList>
            <consortium name="US DOE Joint Genome Institute"/>
            <person name="Copeland A."/>
            <person name="Lucas S."/>
            <person name="Lapidus A."/>
            <person name="Barry K."/>
            <person name="Detter J.C."/>
            <person name="Glavina del Rio T."/>
            <person name="Hammon N."/>
            <person name="Israni S."/>
            <person name="Dalin E."/>
            <person name="Tice H."/>
            <person name="Pitluck S."/>
            <person name="Di Bartolo G."/>
            <person name="Chain P."/>
            <person name="Malfatti S."/>
            <person name="Shin M."/>
            <person name="Vergez L."/>
            <person name="Schmutz J."/>
            <person name="Larimer F."/>
            <person name="Land M."/>
            <person name="Hauser L."/>
            <person name="Worsham P."/>
            <person name="Chu M."/>
            <person name="Bearden S."/>
            <person name="Garcia E."/>
            <person name="Richardson P."/>
        </authorList>
    </citation>
    <scope>NUCLEOTIDE SEQUENCE [LARGE SCALE GENOMIC DNA]</scope>
    <source>
        <strain>Pestoides F</strain>
    </source>
</reference>
<name>RSMC_YERPP</name>
<proteinExistence type="inferred from homology"/>
<evidence type="ECO:0000255" key="1">
    <source>
        <dbReference type="HAMAP-Rule" id="MF_01862"/>
    </source>
</evidence>